<evidence type="ECO:0000255" key="1">
    <source>
        <dbReference type="HAMAP-Rule" id="MF_01296"/>
    </source>
</evidence>
<evidence type="ECO:0000305" key="2"/>
<protein>
    <recommendedName>
        <fullName evidence="1">D-tagatose-1,6-bisphosphate aldolase subunit GatZ</fullName>
    </recommendedName>
</protein>
<sequence length="423" mass="47230">MKEIISRHKAGEQIGICSVCSAHPLVIESALRFDLNSGNKVLIEATSNQVNQFGGYTGMKPADFRDFVYGIAQEVGFPRERLILGGDHLGPNCWQNEPAAAAMEKSVELIKAYVAAGFSKIHLDASMSCADDPTPLDPMVVAKRAALLCQAAETTATDEQKRHLTYVIGTEVPVPGGEASAINAVHVTREQDAARTLQTHQAAFRVLGLDEALNRVIAIVVQPGVEFDHTQIIHYQPQAAQALSAWIKETPMVYEAHSTDYQTRQAYRALVRDHYAILKVGPALTFALREAIFALAQMENELISPEQRSRVLEVIDEVMLNEPGYWKKYYRPTWSQAMVDIHFSLSDRIRYYWPHPRIRQSVEKLIANLNNVTLPLGLISQFMPVQFERLSEGVLTPTPHNLIIDKIQDVLRAYRFGCTPDVA</sequence>
<organism>
    <name type="scientific">Salmonella newport (strain SL254)</name>
    <dbReference type="NCBI Taxonomy" id="423368"/>
    <lineage>
        <taxon>Bacteria</taxon>
        <taxon>Pseudomonadati</taxon>
        <taxon>Pseudomonadota</taxon>
        <taxon>Gammaproteobacteria</taxon>
        <taxon>Enterobacterales</taxon>
        <taxon>Enterobacteriaceae</taxon>
        <taxon>Salmonella</taxon>
    </lineage>
</organism>
<dbReference type="EMBL" id="CP001113">
    <property type="protein sequence ID" value="ACF62260.1"/>
    <property type="status" value="ALT_INIT"/>
    <property type="molecule type" value="Genomic_DNA"/>
</dbReference>
<dbReference type="RefSeq" id="WP_000658734.1">
    <property type="nucleotide sequence ID" value="NZ_CCMR01000001.1"/>
</dbReference>
<dbReference type="SMR" id="B4T6C0"/>
<dbReference type="KEGG" id="see:SNSL254_A3515"/>
<dbReference type="HOGENOM" id="CLU_053334_0_0_6"/>
<dbReference type="UniPathway" id="UPA00704">
    <property type="reaction ID" value="UER00716"/>
</dbReference>
<dbReference type="Proteomes" id="UP000008824">
    <property type="component" value="Chromosome"/>
</dbReference>
<dbReference type="GO" id="GO:0005886">
    <property type="term" value="C:plasma membrane"/>
    <property type="evidence" value="ECO:0007669"/>
    <property type="project" value="TreeGrafter"/>
</dbReference>
<dbReference type="GO" id="GO:2001059">
    <property type="term" value="P:D-tagatose 6-phosphate catabolic process"/>
    <property type="evidence" value="ECO:0007669"/>
    <property type="project" value="UniProtKB-UniRule"/>
</dbReference>
<dbReference type="GO" id="GO:0019402">
    <property type="term" value="P:galactitol metabolic process"/>
    <property type="evidence" value="ECO:0007669"/>
    <property type="project" value="UniProtKB-KW"/>
</dbReference>
<dbReference type="GO" id="GO:0009401">
    <property type="term" value="P:phosphoenolpyruvate-dependent sugar phosphotransferase system"/>
    <property type="evidence" value="ECO:0007669"/>
    <property type="project" value="TreeGrafter"/>
</dbReference>
<dbReference type="FunFam" id="1.10.400.20:FF:000001">
    <property type="entry name" value="D-tagatose-1,6-bisphosphate aldolase subunit GatZ"/>
    <property type="match status" value="1"/>
</dbReference>
<dbReference type="FunFam" id="3.20.20.70:FF:000141">
    <property type="entry name" value="D-tagatose-1,6-bisphosphate aldolase subunit GatZ"/>
    <property type="match status" value="1"/>
</dbReference>
<dbReference type="Gene3D" id="3.20.20.70">
    <property type="entry name" value="Aldolase class I"/>
    <property type="match status" value="1"/>
</dbReference>
<dbReference type="Gene3D" id="1.10.400.20">
    <property type="entry name" value="putative tagatose 6-phosphate kinase domain like"/>
    <property type="match status" value="1"/>
</dbReference>
<dbReference type="HAMAP" id="MF_01296">
    <property type="entry name" value="Tagatose_aldol_GatZ"/>
    <property type="match status" value="1"/>
</dbReference>
<dbReference type="InterPro" id="IPR013785">
    <property type="entry name" value="Aldolase_TIM"/>
</dbReference>
<dbReference type="InterPro" id="IPR012062">
    <property type="entry name" value="GatZ/KbaZ-like"/>
</dbReference>
<dbReference type="InterPro" id="IPR050303">
    <property type="entry name" value="GatZ_KbaZ_carbometab"/>
</dbReference>
<dbReference type="InterPro" id="IPR023436">
    <property type="entry name" value="TagBP_ald_GatZ"/>
</dbReference>
<dbReference type="NCBIfam" id="TIGR02810">
    <property type="entry name" value="agaZ_gatZ"/>
    <property type="match status" value="1"/>
</dbReference>
<dbReference type="NCBIfam" id="NF011626">
    <property type="entry name" value="PRK15052.1"/>
    <property type="match status" value="1"/>
</dbReference>
<dbReference type="PANTHER" id="PTHR32502:SF12">
    <property type="entry name" value="D-TAGATOSE-1,6-BISPHOSPHATE ALDOLASE SUBUNIT GATZ"/>
    <property type="match status" value="1"/>
</dbReference>
<dbReference type="PANTHER" id="PTHR32502">
    <property type="entry name" value="N-ACETYLGALACTOSAMINE PERMEASE II COMPONENT-RELATED"/>
    <property type="match status" value="1"/>
</dbReference>
<dbReference type="Pfam" id="PF08013">
    <property type="entry name" value="GatZ_KbaZ-like"/>
    <property type="match status" value="1"/>
</dbReference>
<dbReference type="PIRSF" id="PIRSF009264">
    <property type="entry name" value="TagBP_ald_AgaZ"/>
    <property type="match status" value="1"/>
</dbReference>
<dbReference type="SUPFAM" id="SSF51569">
    <property type="entry name" value="Aldolase"/>
    <property type="match status" value="1"/>
</dbReference>
<name>GATZ_SALNS</name>
<comment type="function">
    <text evidence="1">Component of the tagatose-1,6-bisphosphate aldolase GatYZ that is required for full activity and stability of the Y subunit. Could have a chaperone-like function for the proper and stable folding of GatY. When expressed alone, GatZ does not show any aldolase activity. Is involved in the catabolism of galactitol.</text>
</comment>
<comment type="pathway">
    <text evidence="1">Carbohydrate metabolism; D-tagatose 6-phosphate degradation; D-glyceraldehyde 3-phosphate and glycerone phosphate from D-tagatose 6-phosphate: step 2/2.</text>
</comment>
<comment type="subunit">
    <text evidence="1">Forms a complex with GatY.</text>
</comment>
<comment type="similarity">
    <text evidence="1">Belongs to the GatZ/KbaZ family. GatZ subfamily.</text>
</comment>
<comment type="sequence caution" evidence="2">
    <conflict type="erroneous initiation">
        <sequence resource="EMBL-CDS" id="ACF62260"/>
    </conflict>
</comment>
<keyword id="KW-0298">Galactitol metabolism</keyword>
<reference key="1">
    <citation type="journal article" date="2011" name="J. Bacteriol.">
        <title>Comparative genomics of 28 Salmonella enterica isolates: evidence for CRISPR-mediated adaptive sublineage evolution.</title>
        <authorList>
            <person name="Fricke W.F."/>
            <person name="Mammel M.K."/>
            <person name="McDermott P.F."/>
            <person name="Tartera C."/>
            <person name="White D.G."/>
            <person name="Leclerc J.E."/>
            <person name="Ravel J."/>
            <person name="Cebula T.A."/>
        </authorList>
    </citation>
    <scope>NUCLEOTIDE SEQUENCE [LARGE SCALE GENOMIC DNA]</scope>
    <source>
        <strain>SL254</strain>
    </source>
</reference>
<gene>
    <name evidence="1" type="primary">gatZ</name>
    <name type="ordered locus">SNSL254_A3515</name>
</gene>
<accession>B4T6C0</accession>
<proteinExistence type="inferred from homology"/>
<feature type="chain" id="PRO_0000372513" description="D-tagatose-1,6-bisphosphate aldolase subunit GatZ">
    <location>
        <begin position="1"/>
        <end position="423"/>
    </location>
</feature>